<gene>
    <name evidence="20" type="primary">SAP3</name>
</gene>
<organism>
    <name type="scientific">Candida albicans</name>
    <name type="common">Yeast</name>
    <dbReference type="NCBI Taxonomy" id="5476"/>
    <lineage>
        <taxon>Eukaryota</taxon>
        <taxon>Fungi</taxon>
        <taxon>Dikarya</taxon>
        <taxon>Ascomycota</taxon>
        <taxon>Saccharomycotina</taxon>
        <taxon>Pichiomycetes</taxon>
        <taxon>Debaryomycetaceae</taxon>
        <taxon>Candida/Lodderomyces clade</taxon>
        <taxon>Candida</taxon>
    </lineage>
</organism>
<reference key="1">
    <citation type="journal article" date="1993" name="J. Bacteriol.">
        <title>Three distinct secreted aspartyl proteinases in Candida albicans.</title>
        <authorList>
            <person name="White T.C."/>
            <person name="Miyasaki S.H."/>
            <person name="Agabian N."/>
        </authorList>
    </citation>
    <scope>NUCLEOTIDE SEQUENCE [GENOMIC DNA]</scope>
    <scope>INDUCTION</scope>
    <source>
        <strain>SS</strain>
    </source>
</reference>
<reference key="2">
    <citation type="journal article" date="1997" name="Microbiology">
        <title>Analysis of secreted aspartic proteinases from Candida albicans: purification and characterization of individual Sap1, Sap2 and Sap3 isoenzymes.</title>
        <authorList>
            <person name="Smolenski G."/>
            <person name="Sullivan P.A."/>
            <person name="Cutfield S.M."/>
            <person name="Cutfield J.F."/>
        </authorList>
    </citation>
    <scope>CATALYTIC ACTIVITY</scope>
    <scope>BIOPHYSICOCHEMICAL PROPERTIES</scope>
</reference>
<reference key="3">
    <citation type="journal article" date="1999" name="J. Infect. Dis.">
        <title>Evidence that members of the secretory aspartyl proteinase gene family, in particular SAP2, are virulence factors for Candida vaginitis.</title>
        <authorList>
            <person name="De Bernardis F."/>
            <person name="Arancia S."/>
            <person name="Morelli L."/>
            <person name="Hube B."/>
            <person name="Sanglard D."/>
            <person name="Schafer W."/>
            <person name="Cassone A."/>
        </authorList>
    </citation>
    <scope>SUBCELLULAR LOCATION</scope>
    <scope>CATALYTIC ACTIVITY</scope>
</reference>
<reference key="4">
    <citation type="journal article" date="2001" name="J. Med. Microbiol.">
        <title>Different isoforms of secreted aspartyl proteinases (Sap) are expressed by Candida albicans during oral and cutaneous candidosis in vivo.</title>
        <authorList>
            <person name="Schaller M."/>
            <person name="Januschke E."/>
            <person name="Schackert C."/>
            <person name="Woerle B."/>
            <person name="Korting H.C."/>
        </authorList>
    </citation>
    <scope>FUNCTION</scope>
</reference>
<reference key="5">
    <citation type="journal article" date="2009" name="Mol. Immunol.">
        <title>The yeast Candida albicans evades human complement attack by secretion of aspartic proteases.</title>
        <authorList>
            <person name="Gropp K."/>
            <person name="Schild L."/>
            <person name="Schindler S."/>
            <person name="Hube B."/>
            <person name="Zipfel P.F."/>
            <person name="Skerka C."/>
        </authorList>
    </citation>
    <scope>FUNCTION</scope>
</reference>
<reference key="6">
    <citation type="journal article" date="2010" name="Infect. Immun.">
        <title>The inflammatory response induced by aspartic proteases of Candida albicans is independent of proteolytic activity.</title>
        <authorList>
            <person name="Pietrella D."/>
            <person name="Rachini A."/>
            <person name="Pandey N."/>
            <person name="Schild L."/>
            <person name="Netea M."/>
            <person name="Bistoni F."/>
            <person name="Hube B."/>
            <person name="Vecchiarelli A."/>
        </authorList>
    </citation>
    <scope>FUNCTION</scope>
</reference>
<reference key="7">
    <citation type="journal article" date="2011" name="J. Biochem.">
        <title>Comprehensive characterization of secreted aspartic proteases encoded by a virulence gene family in Candida albicans.</title>
        <authorList>
            <person name="Aoki W."/>
            <person name="Kitahara N."/>
            <person name="Miura N."/>
            <person name="Morisaka H."/>
            <person name="Yamamoto Y."/>
            <person name="Kuroda K."/>
            <person name="Ueda M."/>
        </authorList>
    </citation>
    <scope>CATALYTIC ACTIVITY</scope>
    <scope>BIOPHYSICOCHEMICAL PROPERTIES</scope>
</reference>
<reference key="8">
    <citation type="journal article" date="2013" name="Biochem. Pharmacol.">
        <title>Design, synthesis, inhibition studies, and molecular modeling of pepstatin analogues addressing different secreted aspartic proteinases of Candida albicans.</title>
        <authorList>
            <person name="Cadicamo C.D."/>
            <person name="Mortier J."/>
            <person name="Wolber G."/>
            <person name="Hell M."/>
            <person name="Heinrich I.E."/>
            <person name="Michel D."/>
            <person name="Semlin L."/>
            <person name="Berger U."/>
            <person name="Korting H.C."/>
            <person name="Holtje H.D."/>
            <person name="Koksch B."/>
            <person name="Borelli C."/>
        </authorList>
    </citation>
    <scope>ACTIVITY REGULATION</scope>
</reference>
<reference key="9">
    <citation type="journal article" date="2012" name="Pol. J. Microbiol.">
        <title>In vitro study of secreted aspartyl proteinases Sap1 to Sap3 and Sap4 to Sap6 expression in Candida albicans pleomorphic forms.</title>
        <authorList>
            <person name="Staniszewska M."/>
            <person name="Bondaryk M."/>
            <person name="Siennicka K."/>
            <person name="Kurek A."/>
            <person name="Orlowski J."/>
            <person name="Schaller M."/>
            <person name="Kurzatkowski W."/>
        </authorList>
    </citation>
    <scope>INDUCTION</scope>
</reference>
<reference key="10">
    <citation type="journal article" date="2013" name="Peptides">
        <title>Secreted aspartic peptidases of Candida albicans liberate bactericidal hemocidins from human hemoglobin.</title>
        <authorList>
            <person name="Bochenska O."/>
            <person name="Rapala-Kozik M."/>
            <person name="Wolak N."/>
            <person name="Bras G."/>
            <person name="Kozik A."/>
            <person name="Dubin A."/>
            <person name="Aoki W."/>
            <person name="Ueda M."/>
            <person name="Mak P."/>
        </authorList>
    </citation>
    <scope>FUNCTION</scope>
</reference>
<reference key="11">
    <citation type="journal article" date="2016" name="Acta Biochim. Pol.">
        <title>The action of ten secreted aspartic proteases of pathogenic yeast Candida albicans on major human salivary antimicrobial peptide, histatin 5.</title>
        <authorList>
            <person name="Bochenska O."/>
            <person name="Rapala-Kozik M."/>
            <person name="Wolak N."/>
            <person name="Aoki W."/>
            <person name="Ueda M."/>
            <person name="Kozik A."/>
        </authorList>
    </citation>
    <scope>FUNCTION</scope>
    <scope>CATALYTIC ACTIVITY</scope>
    <scope>BIOPHYSICOCHEMICAL PROPERTIES</scope>
</reference>
<accession>P0CY28</accession>
<accession>P43092</accession>
<accession>Q5ANA2</accession>
<comment type="function">
    <text evidence="9 10 11 15">Secreted aspartic peptidases (SAPs) are a group of ten acidic hydrolases considered as key virulence factors (PubMed:11478679, PubMed:19880183, PubMed:20713630, PubMed:23927842). These enzymes supply the fungus with nutrient amino acids as well as are able to degrade the selected host's proteins involved in the immune defense (PubMed:11478679, PubMed:19880183, PubMed:23927842). Induces host inflammatory cytokine production in a proteolytic activity-independent way (PubMed:20713630). Moreover, acts toward human hemoglobin though limited proteolysis to generate a variety of antimicrobial hemocidins, enabling to compete with the other microorganisms of the same physiological niche using the microbicidal peptides generated from the host protein (PubMed:23927842).</text>
</comment>
<comment type="function">
    <text evidence="16">Plays a key role in defense against host by cleaving histatin-5 (Hst 5), a peptide from human saliva that carries out fungicidal activity (PubMed:27390786). The cleavage rate decreases in an order of SAP2 &gt; SAP9 &gt; SAP3 &gt; SAP7 &gt; SAP4 &gt; SAP1 &gt; SAP8 (PubMed:27390786). The first cleavage occurs between residues 'Lys-17' and 'His-18' of Hst 5, giving DSHAKRHHGYKRKFHEK and HHSHRGY peptides (PubMed:27390786). Simultaneously, the DSHAKRHHGYKRK peptide is also formed (PubMed:27390786). Further fragmentation by SAP3 results in DSHAKRHHGY and KRKFHEK products (PubMed:27390786).</text>
</comment>
<comment type="catalytic activity">
    <reaction evidence="12 16 18 19">
        <text>Preferential cleavage at the carboxyl of hydrophobic amino acids, but fails to cleave 15-Leu-|-Tyr-16, 16-Tyr-|-Leu-17 and 24-Phe-|-Phe-25 of insulin B chain. Activates trypsinogen, and degrades keratin.</text>
        <dbReference type="EC" id="3.4.23.24"/>
    </reaction>
</comment>
<comment type="activity regulation">
    <text evidence="13">Inhibited by pepstatin A analogs.</text>
</comment>
<comment type="biophysicochemical properties">
    <phDependence>
        <text evidence="12 16 18">Optimum pH is 3.0 using BSA or casein-resorufin as substrates, and 6.0-7.0, the pH of the saliva, for cleavage of Hst 5.</text>
    </phDependence>
</comment>
<comment type="subunit">
    <text evidence="2">Monomer.</text>
</comment>
<comment type="subcellular location">
    <subcellularLocation>
        <location evidence="3">Secreted</location>
    </subcellularLocation>
</comment>
<comment type="induction">
    <text evidence="14 17">Expressed during development of germ tubes, pseudohyphae, true hyphae and opaque cells.</text>
</comment>
<comment type="similarity">
    <text evidence="21">Belongs to the peptidase A1 family.</text>
</comment>
<name>CARP3_CANAX</name>
<protein>
    <recommendedName>
        <fullName evidence="20">Secreted aspartic protease 3</fullName>
        <shortName evidence="21">ACP 3</shortName>
        <shortName evidence="21">Aspartate protease 3</shortName>
        <ecNumber evidence="12 16 18 19">3.4.23.24</ecNumber>
    </recommendedName>
    <alternativeName>
        <fullName evidence="21">Candidapepsin-3</fullName>
    </alternativeName>
</protein>
<evidence type="ECO:0000250" key="1"/>
<evidence type="ECO:0000250" key="2">
    <source>
        <dbReference type="UniProtKB" id="P0CS83"/>
    </source>
</evidence>
<evidence type="ECO:0000250" key="3">
    <source>
        <dbReference type="UniProtKB" id="P0CY27"/>
    </source>
</evidence>
<evidence type="ECO:0000250" key="4">
    <source>
        <dbReference type="UniProtKB" id="P0CY29"/>
    </source>
</evidence>
<evidence type="ECO:0000255" key="5"/>
<evidence type="ECO:0000255" key="6">
    <source>
        <dbReference type="PROSITE-ProRule" id="PRU01103"/>
    </source>
</evidence>
<evidence type="ECO:0000255" key="7">
    <source>
        <dbReference type="PROSITE-ProRule" id="PRU10094"/>
    </source>
</evidence>
<evidence type="ECO:0000256" key="8">
    <source>
        <dbReference type="SAM" id="MobiDB-lite"/>
    </source>
</evidence>
<evidence type="ECO:0000269" key="9">
    <source>
    </source>
</evidence>
<evidence type="ECO:0000269" key="10">
    <source>
    </source>
</evidence>
<evidence type="ECO:0000269" key="11">
    <source>
    </source>
</evidence>
<evidence type="ECO:0000269" key="12">
    <source>
    </source>
</evidence>
<evidence type="ECO:0000269" key="13">
    <source>
    </source>
</evidence>
<evidence type="ECO:0000269" key="14">
    <source>
    </source>
</evidence>
<evidence type="ECO:0000269" key="15">
    <source>
    </source>
</evidence>
<evidence type="ECO:0000269" key="16">
    <source>
    </source>
</evidence>
<evidence type="ECO:0000269" key="17">
    <source>
    </source>
</evidence>
<evidence type="ECO:0000269" key="18">
    <source>
    </source>
</evidence>
<evidence type="ECO:0000269" key="19">
    <source>
    </source>
</evidence>
<evidence type="ECO:0000303" key="20">
    <source>
    </source>
</evidence>
<evidence type="ECO:0000305" key="21"/>
<proteinExistence type="evidence at protein level"/>
<feature type="signal peptide" evidence="5">
    <location>
        <begin position="1"/>
        <end position="18"/>
    </location>
</feature>
<feature type="propeptide" id="PRO_0000025852" description="Activation peptide" evidence="1">
    <location>
        <begin position="19"/>
        <end position="58"/>
    </location>
</feature>
<feature type="chain" id="PRO_0000025853" description="Secreted aspartic protease 3">
    <location>
        <begin position="59"/>
        <end position="398"/>
    </location>
</feature>
<feature type="domain" description="Peptidase A1" evidence="6">
    <location>
        <begin position="72"/>
        <end position="384"/>
    </location>
</feature>
<feature type="region of interest" description="Disordered" evidence="8">
    <location>
        <begin position="103"/>
        <end position="139"/>
    </location>
</feature>
<feature type="compositionally biased region" description="Polar residues" evidence="8">
    <location>
        <begin position="103"/>
        <end position="112"/>
    </location>
</feature>
<feature type="compositionally biased region" description="Low complexity" evidence="8">
    <location>
        <begin position="123"/>
        <end position="138"/>
    </location>
</feature>
<feature type="active site" evidence="7">
    <location>
        <position position="90"/>
    </location>
</feature>
<feature type="active site" evidence="7">
    <location>
        <position position="274"/>
    </location>
</feature>
<feature type="binding site" evidence="4">
    <location>
        <begin position="90"/>
        <end position="92"/>
    </location>
    <ligand>
        <name>pepstatin A</name>
        <dbReference type="ChEBI" id="CHEBI:190525"/>
        <note>inhibitor</note>
    </ligand>
</feature>
<feature type="binding site" evidence="4">
    <location>
        <begin position="140"/>
        <end position="143"/>
    </location>
    <ligand>
        <name>pepstatin A</name>
        <dbReference type="ChEBI" id="CHEBI:190525"/>
        <note>inhibitor</note>
    </ligand>
</feature>
<feature type="binding site" evidence="4">
    <location>
        <position position="188"/>
    </location>
    <ligand>
        <name>Zn(2+)</name>
        <dbReference type="ChEBI" id="CHEBI:29105"/>
    </ligand>
</feature>
<feature type="binding site" evidence="4">
    <location>
        <position position="248"/>
    </location>
    <ligand>
        <name>Zn(2+)</name>
        <dbReference type="ChEBI" id="CHEBI:29105"/>
    </ligand>
</feature>
<feature type="binding site" evidence="4">
    <location>
        <position position="254"/>
    </location>
    <ligand>
        <name>Zn(2+)</name>
        <dbReference type="ChEBI" id="CHEBI:29105"/>
    </ligand>
</feature>
<feature type="binding site" evidence="4">
    <location>
        <position position="270"/>
    </location>
    <ligand>
        <name>Zn(2+)</name>
        <dbReference type="ChEBI" id="CHEBI:29105"/>
    </ligand>
</feature>
<feature type="binding site" evidence="4">
    <location>
        <begin position="274"/>
        <end position="278"/>
    </location>
    <ligand>
        <name>pepstatin A</name>
        <dbReference type="ChEBI" id="CHEBI:190525"/>
        <note>inhibitor</note>
    </ligand>
</feature>
<feature type="glycosylation site" description="N-linked (GlcNAc...) asparagine" evidence="5">
    <location>
        <position position="42"/>
    </location>
</feature>
<feature type="glycosylation site" description="N-linked (GlcNAc...) asparagine" evidence="5">
    <location>
        <position position="313"/>
    </location>
</feature>
<feature type="disulfide bond" evidence="3">
    <location>
        <begin position="105"/>
        <end position="116"/>
    </location>
</feature>
<feature type="disulfide bond" evidence="3">
    <location>
        <begin position="312"/>
        <end position="350"/>
    </location>
</feature>
<dbReference type="EC" id="3.4.23.24" evidence="12 16 18 19"/>
<dbReference type="EMBL" id="L22358">
    <property type="protein sequence ID" value="AAA34372.1"/>
    <property type="molecule type" value="Genomic_DNA"/>
</dbReference>
<dbReference type="PIR" id="A36926">
    <property type="entry name" value="A36926"/>
</dbReference>
<dbReference type="SMR" id="P0CY28"/>
<dbReference type="ChEMBL" id="CHEMBL5644"/>
<dbReference type="MEROPS" id="A01.061"/>
<dbReference type="GlyCosmos" id="P0CY28">
    <property type="glycosylation" value="2 sites, No reported glycans"/>
</dbReference>
<dbReference type="EnsemblFungi" id="C3_05230W_A-T">
    <property type="protein sequence ID" value="C3_05230W_A-T-p1"/>
    <property type="gene ID" value="C3_05230W_A"/>
</dbReference>
<dbReference type="VEuPathDB" id="FungiDB:C3_05230W_A"/>
<dbReference type="VEuPathDB" id="FungiDB:CAWG_02837"/>
<dbReference type="PhylomeDB" id="P0CY28"/>
<dbReference type="PHI-base" id="PHI:73"/>
<dbReference type="GO" id="GO:0005576">
    <property type="term" value="C:extracellular region"/>
    <property type="evidence" value="ECO:0007669"/>
    <property type="project" value="UniProtKB-SubCell"/>
</dbReference>
<dbReference type="GO" id="GO:0004190">
    <property type="term" value="F:aspartic-type endopeptidase activity"/>
    <property type="evidence" value="ECO:0007669"/>
    <property type="project" value="UniProtKB-KW"/>
</dbReference>
<dbReference type="GO" id="GO:0046872">
    <property type="term" value="F:metal ion binding"/>
    <property type="evidence" value="ECO:0007669"/>
    <property type="project" value="UniProtKB-KW"/>
</dbReference>
<dbReference type="GO" id="GO:0006508">
    <property type="term" value="P:proteolysis"/>
    <property type="evidence" value="ECO:0007669"/>
    <property type="project" value="UniProtKB-KW"/>
</dbReference>
<dbReference type="CDD" id="cd05474">
    <property type="entry name" value="SAP_like"/>
    <property type="match status" value="1"/>
</dbReference>
<dbReference type="FunFam" id="2.40.70.10:FF:000011">
    <property type="entry name" value="Aspartic protease"/>
    <property type="match status" value="1"/>
</dbReference>
<dbReference type="FunFam" id="2.40.70.10:FF:000023">
    <property type="entry name" value="Aspartic protease"/>
    <property type="match status" value="1"/>
</dbReference>
<dbReference type="Gene3D" id="2.40.70.10">
    <property type="entry name" value="Acid Proteases"/>
    <property type="match status" value="2"/>
</dbReference>
<dbReference type="InterPro" id="IPR001461">
    <property type="entry name" value="Aspartic_peptidase_A1"/>
</dbReference>
<dbReference type="InterPro" id="IPR001969">
    <property type="entry name" value="Aspartic_peptidase_AS"/>
</dbReference>
<dbReference type="InterPro" id="IPR033121">
    <property type="entry name" value="PEPTIDASE_A1"/>
</dbReference>
<dbReference type="InterPro" id="IPR021109">
    <property type="entry name" value="Peptidase_aspartic_dom_sf"/>
</dbReference>
<dbReference type="InterPro" id="IPR033876">
    <property type="entry name" value="SAP-like"/>
</dbReference>
<dbReference type="PANTHER" id="PTHR47966:SF65">
    <property type="entry name" value="ASPARTIC-TYPE ENDOPEPTIDASE"/>
    <property type="match status" value="1"/>
</dbReference>
<dbReference type="PANTHER" id="PTHR47966">
    <property type="entry name" value="BETA-SITE APP-CLEAVING ENZYME, ISOFORM A-RELATED"/>
    <property type="match status" value="1"/>
</dbReference>
<dbReference type="Pfam" id="PF00026">
    <property type="entry name" value="Asp"/>
    <property type="match status" value="1"/>
</dbReference>
<dbReference type="PRINTS" id="PR00792">
    <property type="entry name" value="PEPSIN"/>
</dbReference>
<dbReference type="SUPFAM" id="SSF50630">
    <property type="entry name" value="Acid proteases"/>
    <property type="match status" value="1"/>
</dbReference>
<dbReference type="PROSITE" id="PS00141">
    <property type="entry name" value="ASP_PROTEASE"/>
    <property type="match status" value="2"/>
</dbReference>
<dbReference type="PROSITE" id="PS51767">
    <property type="entry name" value="PEPTIDASE_A1"/>
    <property type="match status" value="1"/>
</dbReference>
<sequence>MFLKNIFIALAIALLADATPTTFNNSPGFVALNFDVIKTHKNVTGPQGEINTNVNVKRQTVPVKLINEQVSYASDITVGSNKQKLTVVIDTGSSDLWVPDSQVSCQAGQGQDPNFCKNEGTYSPSSSSSSQNLNSPFSIEYGDGTTSQGTWYKDTIGFGGISITKQQFADVTSTSVDQGILGIGYKTHEAEGNYDNVPVTLKNQGIISKNAYSLYLNSRQATSGQIIFGGVDNAKYSGTLIALPVTSDNELRIHLNTVKVAGQSINADVDVLLDSGTTITYLQQGVADQVISAFNGQETYDANGNLFYLVDCNLSGSVDFAFDKNAKISVPASEFTAPLYTEDGQVYDQCQLLFGTSDYNILGDNFLRSAYIVYDLDDNEISLAQVKYTTASNIAALT</sequence>
<keyword id="KW-0064">Aspartyl protease</keyword>
<keyword id="KW-0165">Cleavage on pair of basic residues</keyword>
<keyword id="KW-1015">Disulfide bond</keyword>
<keyword id="KW-0325">Glycoprotein</keyword>
<keyword id="KW-0378">Hydrolase</keyword>
<keyword id="KW-0479">Metal-binding</keyword>
<keyword id="KW-0645">Protease</keyword>
<keyword id="KW-0964">Secreted</keyword>
<keyword id="KW-0732">Signal</keyword>
<keyword id="KW-0843">Virulence</keyword>
<keyword id="KW-0862">Zinc</keyword>
<keyword id="KW-0865">Zymogen</keyword>